<feature type="chain" id="PRO_1000012976" description="UPF0145 protein BVU_2335">
    <location>
        <begin position="1"/>
        <end position="107"/>
    </location>
</feature>
<organism>
    <name type="scientific">Phocaeicola vulgatus (strain ATCC 8482 / DSM 1447 / JCM 5826 / CCUG 4940 / NBRC 14291 / NCTC 11154)</name>
    <name type="common">Bacteroides vulgatus</name>
    <dbReference type="NCBI Taxonomy" id="435590"/>
    <lineage>
        <taxon>Bacteria</taxon>
        <taxon>Pseudomonadati</taxon>
        <taxon>Bacteroidota</taxon>
        <taxon>Bacteroidia</taxon>
        <taxon>Bacteroidales</taxon>
        <taxon>Bacteroidaceae</taxon>
        <taxon>Phocaeicola</taxon>
    </lineage>
</organism>
<comment type="similarity">
    <text evidence="1">Belongs to the UPF0145 family.</text>
</comment>
<evidence type="ECO:0000255" key="1">
    <source>
        <dbReference type="HAMAP-Rule" id="MF_00338"/>
    </source>
</evidence>
<protein>
    <recommendedName>
        <fullName evidence="1">UPF0145 protein BVU_2335</fullName>
    </recommendedName>
</protein>
<name>Y2335_PHOV8</name>
<sequence>MLATTTPTIEGKRITKYYGIVTGETIIGANLFRDFFASIRDIVGGRSGSYEEVLRQAKDTALREMQDQAALLGANAVVGVDLDYETVGDSGSMLMVTASGTAVRIED</sequence>
<gene>
    <name type="ordered locus">BVU_2335</name>
</gene>
<reference key="1">
    <citation type="journal article" date="2007" name="PLoS Biol.">
        <title>Evolution of symbiotic bacteria in the distal human intestine.</title>
        <authorList>
            <person name="Xu J."/>
            <person name="Mahowald M.A."/>
            <person name="Ley R.E."/>
            <person name="Lozupone C.A."/>
            <person name="Hamady M."/>
            <person name="Martens E.C."/>
            <person name="Henrissat B."/>
            <person name="Coutinho P.M."/>
            <person name="Minx P."/>
            <person name="Latreille P."/>
            <person name="Cordum H."/>
            <person name="Van Brunt A."/>
            <person name="Kim K."/>
            <person name="Fulton R.S."/>
            <person name="Fulton L.A."/>
            <person name="Clifton S.W."/>
            <person name="Wilson R.K."/>
            <person name="Knight R.D."/>
            <person name="Gordon J.I."/>
        </authorList>
    </citation>
    <scope>NUCLEOTIDE SEQUENCE [LARGE SCALE GENOMIC DNA]</scope>
    <source>
        <strain>ATCC 8482 / DSM 1447 / JCM 5826 / CCUG 4940 / NBRC 14291 / NCTC 11154</strain>
    </source>
</reference>
<proteinExistence type="inferred from homology"/>
<accession>A6L2T0</accession>
<dbReference type="EMBL" id="CP000139">
    <property type="protein sequence ID" value="ABR39994.1"/>
    <property type="molecule type" value="Genomic_DNA"/>
</dbReference>
<dbReference type="RefSeq" id="WP_005846220.1">
    <property type="nucleotide sequence ID" value="NZ_JANSWM010000034.1"/>
</dbReference>
<dbReference type="SMR" id="A6L2T0"/>
<dbReference type="STRING" id="435590.BVU_2335"/>
<dbReference type="PaxDb" id="435590-BVU_2335"/>
<dbReference type="KEGG" id="bvu:BVU_2335"/>
<dbReference type="eggNOG" id="COG0393">
    <property type="taxonomic scope" value="Bacteria"/>
</dbReference>
<dbReference type="HOGENOM" id="CLU_117144_3_2_10"/>
<dbReference type="BioCyc" id="BVUL435590:G1G59-2428-MONOMER"/>
<dbReference type="Proteomes" id="UP000002861">
    <property type="component" value="Chromosome"/>
</dbReference>
<dbReference type="Gene3D" id="3.30.110.70">
    <property type="entry name" value="Hypothetical protein apc22750. Chain B"/>
    <property type="match status" value="1"/>
</dbReference>
<dbReference type="HAMAP" id="MF_00338">
    <property type="entry name" value="UPF0145"/>
    <property type="match status" value="1"/>
</dbReference>
<dbReference type="InterPro" id="IPR035439">
    <property type="entry name" value="UPF0145_dom_sf"/>
</dbReference>
<dbReference type="InterPro" id="IPR002765">
    <property type="entry name" value="UPF0145_YbjQ-like"/>
</dbReference>
<dbReference type="NCBIfam" id="NF002776">
    <property type="entry name" value="PRK02877.1"/>
    <property type="match status" value="1"/>
</dbReference>
<dbReference type="PANTHER" id="PTHR34068">
    <property type="entry name" value="UPF0145 PROTEIN YBJQ"/>
    <property type="match status" value="1"/>
</dbReference>
<dbReference type="PANTHER" id="PTHR34068:SF1">
    <property type="entry name" value="UPF0145 PROTEIN YBJQ"/>
    <property type="match status" value="1"/>
</dbReference>
<dbReference type="Pfam" id="PF01906">
    <property type="entry name" value="YbjQ_1"/>
    <property type="match status" value="1"/>
</dbReference>
<dbReference type="SUPFAM" id="SSF117782">
    <property type="entry name" value="YbjQ-like"/>
    <property type="match status" value="1"/>
</dbReference>